<feature type="signal peptide" evidence="1">
    <location>
        <begin position="1"/>
        <end position="20"/>
    </location>
</feature>
<feature type="chain" id="PRO_0000416238" description="Fibronectin type III domain-containing protein 10">
    <location>
        <begin position="21"/>
        <end position="226"/>
    </location>
</feature>
<feature type="topological domain" description="Extracellular" evidence="1">
    <location>
        <begin position="21"/>
        <end position="182"/>
    </location>
</feature>
<feature type="transmembrane region" description="Helical" evidence="1">
    <location>
        <begin position="183"/>
        <end position="203"/>
    </location>
</feature>
<feature type="topological domain" description="Cytoplasmic" evidence="1">
    <location>
        <begin position="204"/>
        <end position="226"/>
    </location>
</feature>
<feature type="domain" description="Fibronectin type-III">
    <location>
        <begin position="74"/>
        <end position="166"/>
    </location>
</feature>
<feature type="glycosylation site" description="N-linked (GlcNAc...) asparagine" evidence="1">
    <location>
        <position position="86"/>
    </location>
</feature>
<feature type="glycosylation site" description="N-linked (GlcNAc...) asparagine" evidence="1">
    <location>
        <position position="109"/>
    </location>
</feature>
<keyword id="KW-0325">Glycoprotein</keyword>
<keyword id="KW-0472">Membrane</keyword>
<keyword id="KW-1267">Proteomics identification</keyword>
<keyword id="KW-1185">Reference proteome</keyword>
<keyword id="KW-0732">Signal</keyword>
<keyword id="KW-0812">Transmembrane</keyword>
<keyword id="KW-1133">Transmembrane helix</keyword>
<reference key="1">
    <citation type="journal article" date="2006" name="Nature">
        <title>The DNA sequence and biological annotation of human chromosome 1.</title>
        <authorList>
            <person name="Gregory S.G."/>
            <person name="Barlow K.F."/>
            <person name="McLay K.E."/>
            <person name="Kaul R."/>
            <person name="Swarbreck D."/>
            <person name="Dunham A."/>
            <person name="Scott C.E."/>
            <person name="Howe K.L."/>
            <person name="Woodfine K."/>
            <person name="Spencer C.C.A."/>
            <person name="Jones M.C."/>
            <person name="Gillson C."/>
            <person name="Searle S."/>
            <person name="Zhou Y."/>
            <person name="Kokocinski F."/>
            <person name="McDonald L."/>
            <person name="Evans R."/>
            <person name="Phillips K."/>
            <person name="Atkinson A."/>
            <person name="Cooper R."/>
            <person name="Jones C."/>
            <person name="Hall R.E."/>
            <person name="Andrews T.D."/>
            <person name="Lloyd C."/>
            <person name="Ainscough R."/>
            <person name="Almeida J.P."/>
            <person name="Ambrose K.D."/>
            <person name="Anderson F."/>
            <person name="Andrew R.W."/>
            <person name="Ashwell R.I.S."/>
            <person name="Aubin K."/>
            <person name="Babbage A.K."/>
            <person name="Bagguley C.L."/>
            <person name="Bailey J."/>
            <person name="Beasley H."/>
            <person name="Bethel G."/>
            <person name="Bird C.P."/>
            <person name="Bray-Allen S."/>
            <person name="Brown J.Y."/>
            <person name="Brown A.J."/>
            <person name="Buckley D."/>
            <person name="Burton J."/>
            <person name="Bye J."/>
            <person name="Carder C."/>
            <person name="Chapman J.C."/>
            <person name="Clark S.Y."/>
            <person name="Clarke G."/>
            <person name="Clee C."/>
            <person name="Cobley V."/>
            <person name="Collier R.E."/>
            <person name="Corby N."/>
            <person name="Coville G.J."/>
            <person name="Davies J."/>
            <person name="Deadman R."/>
            <person name="Dunn M."/>
            <person name="Earthrowl M."/>
            <person name="Ellington A.G."/>
            <person name="Errington H."/>
            <person name="Frankish A."/>
            <person name="Frankland J."/>
            <person name="French L."/>
            <person name="Garner P."/>
            <person name="Garnett J."/>
            <person name="Gay L."/>
            <person name="Ghori M.R.J."/>
            <person name="Gibson R."/>
            <person name="Gilby L.M."/>
            <person name="Gillett W."/>
            <person name="Glithero R.J."/>
            <person name="Grafham D.V."/>
            <person name="Griffiths C."/>
            <person name="Griffiths-Jones S."/>
            <person name="Grocock R."/>
            <person name="Hammond S."/>
            <person name="Harrison E.S.I."/>
            <person name="Hart E."/>
            <person name="Haugen E."/>
            <person name="Heath P.D."/>
            <person name="Holmes S."/>
            <person name="Holt K."/>
            <person name="Howden P.J."/>
            <person name="Hunt A.R."/>
            <person name="Hunt S.E."/>
            <person name="Hunter G."/>
            <person name="Isherwood J."/>
            <person name="James R."/>
            <person name="Johnson C."/>
            <person name="Johnson D."/>
            <person name="Joy A."/>
            <person name="Kay M."/>
            <person name="Kershaw J.K."/>
            <person name="Kibukawa M."/>
            <person name="Kimberley A.M."/>
            <person name="King A."/>
            <person name="Knights A.J."/>
            <person name="Lad H."/>
            <person name="Laird G."/>
            <person name="Lawlor S."/>
            <person name="Leongamornlert D.A."/>
            <person name="Lloyd D.M."/>
            <person name="Loveland J."/>
            <person name="Lovell J."/>
            <person name="Lush M.J."/>
            <person name="Lyne R."/>
            <person name="Martin S."/>
            <person name="Mashreghi-Mohammadi M."/>
            <person name="Matthews L."/>
            <person name="Matthews N.S.W."/>
            <person name="McLaren S."/>
            <person name="Milne S."/>
            <person name="Mistry S."/>
            <person name="Moore M.J.F."/>
            <person name="Nickerson T."/>
            <person name="O'Dell C.N."/>
            <person name="Oliver K."/>
            <person name="Palmeiri A."/>
            <person name="Palmer S.A."/>
            <person name="Parker A."/>
            <person name="Patel D."/>
            <person name="Pearce A.V."/>
            <person name="Peck A.I."/>
            <person name="Pelan S."/>
            <person name="Phelps K."/>
            <person name="Phillimore B.J."/>
            <person name="Plumb R."/>
            <person name="Rajan J."/>
            <person name="Raymond C."/>
            <person name="Rouse G."/>
            <person name="Saenphimmachak C."/>
            <person name="Sehra H.K."/>
            <person name="Sheridan E."/>
            <person name="Shownkeen R."/>
            <person name="Sims S."/>
            <person name="Skuce C.D."/>
            <person name="Smith M."/>
            <person name="Steward C."/>
            <person name="Subramanian S."/>
            <person name="Sycamore N."/>
            <person name="Tracey A."/>
            <person name="Tromans A."/>
            <person name="Van Helmond Z."/>
            <person name="Wall M."/>
            <person name="Wallis J.M."/>
            <person name="White S."/>
            <person name="Whitehead S.L."/>
            <person name="Wilkinson J.E."/>
            <person name="Willey D.L."/>
            <person name="Williams H."/>
            <person name="Wilming L."/>
            <person name="Wray P.W."/>
            <person name="Wu Z."/>
            <person name="Coulson A."/>
            <person name="Vaudin M."/>
            <person name="Sulston J.E."/>
            <person name="Durbin R.M."/>
            <person name="Hubbard T."/>
            <person name="Wooster R."/>
            <person name="Dunham I."/>
            <person name="Carter N.P."/>
            <person name="McVean G."/>
            <person name="Ross M.T."/>
            <person name="Harrow J."/>
            <person name="Olson M.V."/>
            <person name="Beck S."/>
            <person name="Rogers J."/>
            <person name="Bentley D.R."/>
        </authorList>
    </citation>
    <scope>NUCLEOTIDE SEQUENCE [LARGE SCALE GENOMIC DNA]</scope>
</reference>
<evidence type="ECO:0000255" key="1"/>
<evidence type="ECO:0000305" key="2"/>
<protein>
    <recommendedName>
        <fullName>Fibronectin type III domain-containing protein 10</fullName>
    </recommendedName>
</protein>
<organism>
    <name type="scientific">Homo sapiens</name>
    <name type="common">Human</name>
    <dbReference type="NCBI Taxonomy" id="9606"/>
    <lineage>
        <taxon>Eukaryota</taxon>
        <taxon>Metazoa</taxon>
        <taxon>Chordata</taxon>
        <taxon>Craniata</taxon>
        <taxon>Vertebrata</taxon>
        <taxon>Euteleostomi</taxon>
        <taxon>Mammalia</taxon>
        <taxon>Eutheria</taxon>
        <taxon>Euarchontoglires</taxon>
        <taxon>Primates</taxon>
        <taxon>Haplorrhini</taxon>
        <taxon>Catarrhini</taxon>
        <taxon>Hominidae</taxon>
        <taxon>Homo</taxon>
    </lineage>
</organism>
<name>FND10_HUMAN</name>
<comment type="subcellular location">
    <subcellularLocation>
        <location evidence="2">Membrane</location>
        <topology evidence="2">Single-pass type I membrane protein</topology>
    </subcellularLocation>
</comment>
<gene>
    <name type="primary">FNDC10</name>
    <name type="synonym">C1orf233</name>
</gene>
<sequence length="226" mass="24218">MRAPPLLLLLAACAPPPCAAAAPTPPGWEPTPDAPWCPYKVLPEGPEAGGGRLCFRSPARGFRCQAPGCVLHAPAGRSLRASVLRNRSVLLQWRLAPAAARRVRAFALNCSWRGAYTRFPCERVLLGASCRDYLLPDVHDSVLYRLCLQPLPLRAGPAAAAPETPEPAECVEFTAEPAGMQDIVVAMTAVGGSICVMLVVICLLVAYITENLMRPALARPGLRRHP</sequence>
<accession>F2Z333</accession>
<proteinExistence type="evidence at protein level"/>
<dbReference type="EMBL" id="AL691432">
    <property type="status" value="NOT_ANNOTATED_CDS"/>
    <property type="molecule type" value="Genomic_DNA"/>
</dbReference>
<dbReference type="CCDS" id="CCDS55559.1"/>
<dbReference type="RefSeq" id="NP_001229588.1">
    <property type="nucleotide sequence ID" value="NM_001242659.2"/>
</dbReference>
<dbReference type="BioGRID" id="569217">
    <property type="interactions" value="2"/>
</dbReference>
<dbReference type="FunCoup" id="F2Z333">
    <property type="interactions" value="1"/>
</dbReference>
<dbReference type="STRING" id="9606.ENSP00000389111"/>
<dbReference type="GlyCosmos" id="F2Z333">
    <property type="glycosylation" value="2 sites, No reported glycans"/>
</dbReference>
<dbReference type="GlyGen" id="F2Z333">
    <property type="glycosylation" value="4 sites, 1 N-linked glycan (1 site)"/>
</dbReference>
<dbReference type="PhosphoSitePlus" id="F2Z333"/>
<dbReference type="BioMuta" id="FNDC10"/>
<dbReference type="MassIVE" id="F2Z333"/>
<dbReference type="PaxDb" id="9606-ENSP00000389111"/>
<dbReference type="PeptideAtlas" id="F2Z333"/>
<dbReference type="ProteomicsDB" id="23877"/>
<dbReference type="DNASU" id="643988"/>
<dbReference type="Ensembl" id="ENST00000422725.4">
    <property type="protein sequence ID" value="ENSP00000389111.1"/>
    <property type="gene ID" value="ENSG00000228594.4"/>
</dbReference>
<dbReference type="GeneID" id="643988"/>
<dbReference type="KEGG" id="hsa:643988"/>
<dbReference type="MANE-Select" id="ENST00000422725.4">
    <property type="protein sequence ID" value="ENSP00000389111.1"/>
    <property type="RefSeq nucleotide sequence ID" value="NM_001242659.2"/>
    <property type="RefSeq protein sequence ID" value="NP_001229588.1"/>
</dbReference>
<dbReference type="UCSC" id="uc021oes.2">
    <property type="organism name" value="human"/>
</dbReference>
<dbReference type="AGR" id="HGNC:42951"/>
<dbReference type="CTD" id="643988"/>
<dbReference type="GeneCards" id="FNDC10"/>
<dbReference type="HGNC" id="HGNC:42951">
    <property type="gene designation" value="FNDC10"/>
</dbReference>
<dbReference type="HPA" id="ENSG00000228594">
    <property type="expression patterns" value="Tissue enhanced (adrenal gland, brain)"/>
</dbReference>
<dbReference type="neXtProt" id="NX_F2Z333"/>
<dbReference type="OpenTargets" id="ENSG00000228594"/>
<dbReference type="VEuPathDB" id="HostDB:ENSG00000228594"/>
<dbReference type="eggNOG" id="ENOG502S019">
    <property type="taxonomic scope" value="Eukaryota"/>
</dbReference>
<dbReference type="GeneTree" id="ENSGT00550000076432"/>
<dbReference type="HOGENOM" id="CLU_097198_0_0_1"/>
<dbReference type="InParanoid" id="F2Z333"/>
<dbReference type="OMA" id="YTRFPCD"/>
<dbReference type="OrthoDB" id="9450734at2759"/>
<dbReference type="PAN-GO" id="F2Z333">
    <property type="GO annotations" value="0 GO annotations based on evolutionary models"/>
</dbReference>
<dbReference type="PhylomeDB" id="F2Z333"/>
<dbReference type="TreeFam" id="TF332961"/>
<dbReference type="PathwayCommons" id="F2Z333"/>
<dbReference type="BioGRID-ORCS" id="643988">
    <property type="hits" value="32 hits in 1132 CRISPR screens"/>
</dbReference>
<dbReference type="ChiTaRS" id="FNDC10">
    <property type="organism name" value="human"/>
</dbReference>
<dbReference type="GenomeRNAi" id="643988"/>
<dbReference type="Pharos" id="F2Z333">
    <property type="development level" value="Tdark"/>
</dbReference>
<dbReference type="PRO" id="PR:F2Z333"/>
<dbReference type="Proteomes" id="UP000005640">
    <property type="component" value="Chromosome 1"/>
</dbReference>
<dbReference type="RNAct" id="F2Z333">
    <property type="molecule type" value="protein"/>
</dbReference>
<dbReference type="Bgee" id="ENSG00000228594">
    <property type="expression patterns" value="Expressed in right adrenal gland cortex and 140 other cell types or tissues"/>
</dbReference>
<dbReference type="GO" id="GO:0016020">
    <property type="term" value="C:membrane"/>
    <property type="evidence" value="ECO:0007669"/>
    <property type="project" value="UniProtKB-SubCell"/>
</dbReference>
<dbReference type="InterPro" id="IPR034446">
    <property type="entry name" value="Fndc10"/>
</dbReference>
<dbReference type="PANTHER" id="PTHR39233">
    <property type="entry name" value="FIBRONECTIN TYPE III DOMAIN-CONTAINING PROTEIN 10"/>
    <property type="match status" value="1"/>
</dbReference>
<dbReference type="PANTHER" id="PTHR39233:SF1">
    <property type="entry name" value="FIBRONECTIN TYPE III DOMAIN-CONTAINING PROTEIN 10"/>
    <property type="match status" value="1"/>
</dbReference>
<dbReference type="Pfam" id="PF17742">
    <property type="entry name" value="Fndc10"/>
    <property type="match status" value="1"/>
</dbReference>